<evidence type="ECO:0000255" key="1">
    <source>
        <dbReference type="HAMAP-Rule" id="MF_00116"/>
    </source>
</evidence>
<reference key="1">
    <citation type="journal article" date="2010" name="Genome Biol. Evol.">
        <title>Continuing evolution of Burkholderia mallei through genome reduction and large-scale rearrangements.</title>
        <authorList>
            <person name="Losada L."/>
            <person name="Ronning C.M."/>
            <person name="DeShazer D."/>
            <person name="Woods D."/>
            <person name="Fedorova N."/>
            <person name="Kim H.S."/>
            <person name="Shabalina S.A."/>
            <person name="Pearson T.R."/>
            <person name="Brinkac L."/>
            <person name="Tan P."/>
            <person name="Nandi T."/>
            <person name="Crabtree J."/>
            <person name="Badger J."/>
            <person name="Beckstrom-Sternberg S."/>
            <person name="Saqib M."/>
            <person name="Schutzer S.E."/>
            <person name="Keim P."/>
            <person name="Nierman W.C."/>
        </authorList>
    </citation>
    <scope>NUCLEOTIDE SEQUENCE [LARGE SCALE GENOMIC DNA]</scope>
    <source>
        <strain>1106a</strain>
    </source>
</reference>
<keyword id="KW-0378">Hydrolase</keyword>
<keyword id="KW-0460">Magnesium</keyword>
<keyword id="KW-0479">Metal-binding</keyword>
<keyword id="KW-0546">Nucleotide metabolism</keyword>
<sequence length="148" mass="15802">MKLDLKILDARMRDYLPKYATTGSAGLDLRACLDAPVTLKPGDTALVPTGLAIHLADPGYAALILPRSGLGHKHGIVLGNLVGLIDSDYQGELMISTWNRGQTEFALNPFERLAQLVIVPVVQARFNLVDDFAQSERGAGGFGSTGRG</sequence>
<comment type="function">
    <text evidence="1">This enzyme is involved in nucleotide metabolism: it produces dUMP, the immediate precursor of thymidine nucleotides and it decreases the intracellular concentration of dUTP so that uracil cannot be incorporated into DNA.</text>
</comment>
<comment type="catalytic activity">
    <reaction evidence="1">
        <text>dUTP + H2O = dUMP + diphosphate + H(+)</text>
        <dbReference type="Rhea" id="RHEA:10248"/>
        <dbReference type="ChEBI" id="CHEBI:15377"/>
        <dbReference type="ChEBI" id="CHEBI:15378"/>
        <dbReference type="ChEBI" id="CHEBI:33019"/>
        <dbReference type="ChEBI" id="CHEBI:61555"/>
        <dbReference type="ChEBI" id="CHEBI:246422"/>
        <dbReference type="EC" id="3.6.1.23"/>
    </reaction>
</comment>
<comment type="cofactor">
    <cofactor evidence="1">
        <name>Mg(2+)</name>
        <dbReference type="ChEBI" id="CHEBI:18420"/>
    </cofactor>
</comment>
<comment type="pathway">
    <text evidence="1">Pyrimidine metabolism; dUMP biosynthesis; dUMP from dCTP (dUTP route): step 2/2.</text>
</comment>
<comment type="similarity">
    <text evidence="1">Belongs to the dUTPase family.</text>
</comment>
<gene>
    <name evidence="1" type="primary">dut</name>
    <name type="ordered locus">BURPS1106A_0968</name>
</gene>
<dbReference type="EC" id="3.6.1.23" evidence="1"/>
<dbReference type="EMBL" id="CP000572">
    <property type="protein sequence ID" value="ABN88774.1"/>
    <property type="molecule type" value="Genomic_DNA"/>
</dbReference>
<dbReference type="RefSeq" id="WP_004186718.1">
    <property type="nucleotide sequence ID" value="NC_009076.1"/>
</dbReference>
<dbReference type="SMR" id="A3NSC8"/>
<dbReference type="GeneID" id="93059416"/>
<dbReference type="KEGG" id="bpl:BURPS1106A_0968"/>
<dbReference type="HOGENOM" id="CLU_068508_1_1_4"/>
<dbReference type="UniPathway" id="UPA00610">
    <property type="reaction ID" value="UER00666"/>
</dbReference>
<dbReference type="Proteomes" id="UP000006738">
    <property type="component" value="Chromosome I"/>
</dbReference>
<dbReference type="GO" id="GO:0004170">
    <property type="term" value="F:dUTP diphosphatase activity"/>
    <property type="evidence" value="ECO:0007669"/>
    <property type="project" value="UniProtKB-UniRule"/>
</dbReference>
<dbReference type="GO" id="GO:0000287">
    <property type="term" value="F:magnesium ion binding"/>
    <property type="evidence" value="ECO:0007669"/>
    <property type="project" value="UniProtKB-UniRule"/>
</dbReference>
<dbReference type="GO" id="GO:0006226">
    <property type="term" value="P:dUMP biosynthetic process"/>
    <property type="evidence" value="ECO:0007669"/>
    <property type="project" value="UniProtKB-UniRule"/>
</dbReference>
<dbReference type="GO" id="GO:0046081">
    <property type="term" value="P:dUTP catabolic process"/>
    <property type="evidence" value="ECO:0007669"/>
    <property type="project" value="InterPro"/>
</dbReference>
<dbReference type="CDD" id="cd07557">
    <property type="entry name" value="trimeric_dUTPase"/>
    <property type="match status" value="1"/>
</dbReference>
<dbReference type="FunFam" id="2.70.40.10:FF:000002">
    <property type="entry name" value="dUTP diphosphatase"/>
    <property type="match status" value="1"/>
</dbReference>
<dbReference type="Gene3D" id="2.70.40.10">
    <property type="match status" value="1"/>
</dbReference>
<dbReference type="HAMAP" id="MF_00116">
    <property type="entry name" value="dUTPase_bact"/>
    <property type="match status" value="1"/>
</dbReference>
<dbReference type="InterPro" id="IPR008181">
    <property type="entry name" value="dUTPase"/>
</dbReference>
<dbReference type="InterPro" id="IPR029054">
    <property type="entry name" value="dUTPase-like"/>
</dbReference>
<dbReference type="InterPro" id="IPR036157">
    <property type="entry name" value="dUTPase-like_sf"/>
</dbReference>
<dbReference type="InterPro" id="IPR033704">
    <property type="entry name" value="dUTPase_trimeric"/>
</dbReference>
<dbReference type="NCBIfam" id="TIGR00576">
    <property type="entry name" value="dut"/>
    <property type="match status" value="1"/>
</dbReference>
<dbReference type="NCBIfam" id="NF001862">
    <property type="entry name" value="PRK00601.1"/>
    <property type="match status" value="1"/>
</dbReference>
<dbReference type="PANTHER" id="PTHR11241">
    <property type="entry name" value="DEOXYURIDINE 5'-TRIPHOSPHATE NUCLEOTIDOHYDROLASE"/>
    <property type="match status" value="1"/>
</dbReference>
<dbReference type="PANTHER" id="PTHR11241:SF0">
    <property type="entry name" value="DEOXYURIDINE 5'-TRIPHOSPHATE NUCLEOTIDOHYDROLASE"/>
    <property type="match status" value="1"/>
</dbReference>
<dbReference type="Pfam" id="PF00692">
    <property type="entry name" value="dUTPase"/>
    <property type="match status" value="1"/>
</dbReference>
<dbReference type="SUPFAM" id="SSF51283">
    <property type="entry name" value="dUTPase-like"/>
    <property type="match status" value="1"/>
</dbReference>
<feature type="chain" id="PRO_1000015455" description="Deoxyuridine 5'-triphosphate nucleotidohydrolase">
    <location>
        <begin position="1"/>
        <end position="148"/>
    </location>
</feature>
<feature type="binding site" evidence="1">
    <location>
        <begin position="67"/>
        <end position="69"/>
    </location>
    <ligand>
        <name>substrate</name>
    </ligand>
</feature>
<feature type="binding site" evidence="1">
    <location>
        <position position="80"/>
    </location>
    <ligand>
        <name>substrate</name>
    </ligand>
</feature>
<feature type="binding site" evidence="1">
    <location>
        <begin position="84"/>
        <end position="86"/>
    </location>
    <ligand>
        <name>substrate</name>
    </ligand>
</feature>
<feature type="binding site" evidence="1">
    <location>
        <position position="94"/>
    </location>
    <ligand>
        <name>substrate</name>
    </ligand>
</feature>
<organism>
    <name type="scientific">Burkholderia pseudomallei (strain 1106a)</name>
    <dbReference type="NCBI Taxonomy" id="357348"/>
    <lineage>
        <taxon>Bacteria</taxon>
        <taxon>Pseudomonadati</taxon>
        <taxon>Pseudomonadota</taxon>
        <taxon>Betaproteobacteria</taxon>
        <taxon>Burkholderiales</taxon>
        <taxon>Burkholderiaceae</taxon>
        <taxon>Burkholderia</taxon>
        <taxon>pseudomallei group</taxon>
    </lineage>
</organism>
<protein>
    <recommendedName>
        <fullName evidence="1">Deoxyuridine 5'-triphosphate nucleotidohydrolase</fullName>
        <shortName evidence="1">dUTPase</shortName>
        <ecNumber evidence="1">3.6.1.23</ecNumber>
    </recommendedName>
    <alternativeName>
        <fullName evidence="1">dUTP pyrophosphatase</fullName>
    </alternativeName>
</protein>
<name>DUT_BURP0</name>
<proteinExistence type="inferred from homology"/>
<accession>A3NSC8</accession>